<comment type="function">
    <text evidence="4 10 17">Component of the 20S core proteasome complex involved in the proteolytic degradation of most intracellular proteins. This complex plays numerous essential roles within the cell by associating with different regulatory particles. Associated with two 19S regulatory particles, forms the 26S proteasome and thus participates in the ATP-dependent degradation of ubiquitinated proteins. The 26S proteasome plays a key role in the maintenance of protein homeostasis by removing misfolded or damaged proteins that could impair cellular functions, and by removing proteins whose functions are no longer required. Associated with the PA200 or PA28, the 20S proteasome mediates ubiquitin-independent protein degradation. This type of proteolysis is required in several pathways including spermatogenesis (20S-PA200 complex) or generation of a subset of MHC class I-presented antigenic peptides (20S-PA28 complex). Within the 20S core complex, PSMB6 displays a peptidylglutamyl-hydrolizing activity also termed postacidic or caspase-like activity, meaning that the peptides bond hydrolysis occurs directly after acidic residues.</text>
</comment>
<comment type="catalytic activity">
    <reaction evidence="10">
        <text>Cleavage of peptide bonds with very broad specificity.</text>
        <dbReference type="EC" id="3.4.25.1"/>
    </reaction>
</comment>
<comment type="subunit">
    <text evidence="8 9 11 12 13 14 16">The 26S proteasome consists of a 20S proteasome core and two 19S regulatory subunits. The 20S proteasome core is a barrel-shaped complex made of 28 subunits that are arranged in four stacked rings. The two outer rings are each formed by seven alpha subunits, and the two inner rings are formed by seven beta subunits. The proteolytic activity is exerted by three beta-subunits PSMB5, PSMB6 and PSMB7.</text>
</comment>
<comment type="subunit">
    <text evidence="3">(Microbial infection) Interacts with HIV-1 protein Tat.</text>
</comment>
<comment type="interaction">
    <interactant intactId="EBI-359288">
        <id>P28072</id>
    </interactant>
    <interactant intactId="EBI-466029">
        <id>P42858</id>
        <label>HTT</label>
    </interactant>
    <organismsDiffer>false</organismsDiffer>
    <experiments>3</experiments>
</comment>
<comment type="interaction">
    <interactant intactId="EBI-359288">
        <id>P28072</id>
    </interactant>
    <interactant intactId="EBI-10249760">
        <id>Q9UHB4</id>
        <label>NDOR1</label>
    </interactant>
    <organismsDiffer>false</organismsDiffer>
    <experiments>3</experiments>
</comment>
<comment type="interaction">
    <interactant intactId="EBI-359288">
        <id>P28072</id>
    </interactant>
    <interactant intactId="EBI-696895">
        <id>Q9Y244</id>
        <label>POMP</label>
    </interactant>
    <organismsDiffer>false</organismsDiffer>
    <experiments>3</experiments>
</comment>
<comment type="interaction">
    <interactant intactId="EBI-359288">
        <id>P28072</id>
    </interactant>
    <interactant intactId="EBI-603319">
        <id>Q99436</id>
        <label>PSMB7</label>
    </interactant>
    <organismsDiffer>false</organismsDiffer>
    <experiments>5</experiments>
</comment>
<comment type="subcellular location">
    <subcellularLocation>
        <location evidence="2 14">Cytoplasm</location>
    </subcellularLocation>
    <subcellularLocation>
        <location evidence="2 14">Nucleus</location>
    </subcellularLocation>
    <text evidence="14">Translocated from the cytoplasm into the nucleus following interaction with AKIRIN2, which bridges the proteasome with the nuclear import receptor IPO9.</text>
</comment>
<comment type="induction">
    <text evidence="5 15">Down-regulated by IFNG/IFN-gamma (at protein level). Up-regulated in anaplastic thyroid cancer cell lines.</text>
</comment>
<comment type="similarity">
    <text evidence="1">Belongs to the peptidase T1B family.</text>
</comment>
<evidence type="ECO:0000255" key="1">
    <source>
        <dbReference type="PROSITE-ProRule" id="PRU00809"/>
    </source>
</evidence>
<evidence type="ECO:0000269" key="2">
    <source>
    </source>
</evidence>
<evidence type="ECO:0000269" key="3">
    <source>
    </source>
</evidence>
<evidence type="ECO:0000269" key="4">
    <source>
    </source>
</evidence>
<evidence type="ECO:0000269" key="5">
    <source>
    </source>
</evidence>
<evidence type="ECO:0000269" key="6">
    <source>
    </source>
</evidence>
<evidence type="ECO:0000269" key="7">
    <source>
    </source>
</evidence>
<evidence type="ECO:0000269" key="8">
    <source>
    </source>
</evidence>
<evidence type="ECO:0000269" key="9">
    <source>
    </source>
</evidence>
<evidence type="ECO:0000269" key="10">
    <source>
    </source>
</evidence>
<evidence type="ECO:0000269" key="11">
    <source>
    </source>
</evidence>
<evidence type="ECO:0000269" key="12">
    <source>
    </source>
</evidence>
<evidence type="ECO:0000269" key="13">
    <source>
    </source>
</evidence>
<evidence type="ECO:0000269" key="14">
    <source>
    </source>
</evidence>
<evidence type="ECO:0000269" key="15">
    <source>
    </source>
</evidence>
<evidence type="ECO:0000269" key="16">
    <source>
    </source>
</evidence>
<evidence type="ECO:0000269" key="17">
    <source>
    </source>
</evidence>
<evidence type="ECO:0000269" key="18">
    <source ref="3"/>
</evidence>
<evidence type="ECO:0000303" key="19">
    <source>
    </source>
</evidence>
<evidence type="ECO:0000305" key="20"/>
<evidence type="ECO:0000312" key="21">
    <source>
        <dbReference type="HGNC" id="HGNC:9543"/>
    </source>
</evidence>
<evidence type="ECO:0007744" key="22">
    <source>
    </source>
</evidence>
<evidence type="ECO:0007744" key="23">
    <source>
    </source>
</evidence>
<evidence type="ECO:0007829" key="24">
    <source>
        <dbReference type="PDB" id="5LE5"/>
    </source>
</evidence>
<evidence type="ECO:0007829" key="25">
    <source>
        <dbReference type="PDB" id="7NAN"/>
    </source>
</evidence>
<evidence type="ECO:0007829" key="26">
    <source>
        <dbReference type="PDB" id="8CVR"/>
    </source>
</evidence>
<evidence type="ECO:0007829" key="27">
    <source>
        <dbReference type="PDB" id="8QYN"/>
    </source>
</evidence>
<keyword id="KW-0002">3D-structure</keyword>
<keyword id="KW-0007">Acetylation</keyword>
<keyword id="KW-0963">Cytoplasm</keyword>
<keyword id="KW-0903">Direct protein sequencing</keyword>
<keyword id="KW-0945">Host-virus interaction</keyword>
<keyword id="KW-0378">Hydrolase</keyword>
<keyword id="KW-0539">Nucleus</keyword>
<keyword id="KW-0597">Phosphoprotein</keyword>
<keyword id="KW-0645">Protease</keyword>
<keyword id="KW-0647">Proteasome</keyword>
<keyword id="KW-1267">Proteomics identification</keyword>
<keyword id="KW-1185">Reference proteome</keyword>
<keyword id="KW-0888">Threonine protease</keyword>
<keyword id="KW-0865">Zymogen</keyword>
<organism>
    <name type="scientific">Homo sapiens</name>
    <name type="common">Human</name>
    <dbReference type="NCBI Taxonomy" id="9606"/>
    <lineage>
        <taxon>Eukaryota</taxon>
        <taxon>Metazoa</taxon>
        <taxon>Chordata</taxon>
        <taxon>Craniata</taxon>
        <taxon>Vertebrata</taxon>
        <taxon>Euteleostomi</taxon>
        <taxon>Mammalia</taxon>
        <taxon>Eutheria</taxon>
        <taxon>Euarchontoglires</taxon>
        <taxon>Primates</taxon>
        <taxon>Haplorrhini</taxon>
        <taxon>Catarrhini</taxon>
        <taxon>Hominidae</taxon>
        <taxon>Homo</taxon>
    </lineage>
</organism>
<dbReference type="EC" id="3.4.25.1" evidence="10"/>
<dbReference type="EMBL" id="D29012">
    <property type="protein sequence ID" value="BAA06098.1"/>
    <property type="molecule type" value="mRNA"/>
</dbReference>
<dbReference type="EMBL" id="BC000835">
    <property type="protein sequence ID" value="AAH00835.1"/>
    <property type="molecule type" value="mRNA"/>
</dbReference>
<dbReference type="EMBL" id="X61971">
    <property type="protein sequence ID" value="CAA43963.1"/>
    <property type="molecule type" value="mRNA"/>
</dbReference>
<dbReference type="CCDS" id="CCDS11056.1"/>
<dbReference type="PIR" id="B54589">
    <property type="entry name" value="B54589"/>
</dbReference>
<dbReference type="PIR" id="S17522">
    <property type="entry name" value="S17522"/>
</dbReference>
<dbReference type="RefSeq" id="NP_002789.1">
    <property type="nucleotide sequence ID" value="NM_002798.3"/>
</dbReference>
<dbReference type="PDB" id="4R3O">
    <property type="method" value="X-ray"/>
    <property type="resolution" value="2.60 A"/>
    <property type="chains" value="H/V=35-236"/>
</dbReference>
<dbReference type="PDB" id="4R67">
    <property type="method" value="X-ray"/>
    <property type="resolution" value="2.89 A"/>
    <property type="chains" value="H/V/j/x=35-236"/>
</dbReference>
<dbReference type="PDB" id="5A0Q">
    <property type="method" value="EM"/>
    <property type="resolution" value="3.50 A"/>
    <property type="chains" value="H/V=35-239"/>
</dbReference>
<dbReference type="PDB" id="5GJQ">
    <property type="method" value="EM"/>
    <property type="resolution" value="4.50 A"/>
    <property type="chains" value="a/o=1-239"/>
</dbReference>
<dbReference type="PDB" id="5GJR">
    <property type="method" value="EM"/>
    <property type="resolution" value="3.50 A"/>
    <property type="chains" value="a/o=1-239"/>
</dbReference>
<dbReference type="PDB" id="5L4G">
    <property type="method" value="EM"/>
    <property type="resolution" value="4.02 A"/>
    <property type="chains" value="6/Z=1-239"/>
</dbReference>
<dbReference type="PDB" id="5LE5">
    <property type="method" value="X-ray"/>
    <property type="resolution" value="1.80 A"/>
    <property type="chains" value="N/b=35-239"/>
</dbReference>
<dbReference type="PDB" id="5LEX">
    <property type="method" value="X-ray"/>
    <property type="resolution" value="2.20 A"/>
    <property type="chains" value="N/b=35-239"/>
</dbReference>
<dbReference type="PDB" id="5LEY">
    <property type="method" value="X-ray"/>
    <property type="resolution" value="1.90 A"/>
    <property type="chains" value="N/b=35-239"/>
</dbReference>
<dbReference type="PDB" id="5LEZ">
    <property type="method" value="X-ray"/>
    <property type="resolution" value="2.19 A"/>
    <property type="chains" value="N/b=35-239"/>
</dbReference>
<dbReference type="PDB" id="5LF0">
    <property type="method" value="X-ray"/>
    <property type="resolution" value="2.41 A"/>
    <property type="chains" value="N/b=35-239"/>
</dbReference>
<dbReference type="PDB" id="5LF1">
    <property type="method" value="X-ray"/>
    <property type="resolution" value="2.00 A"/>
    <property type="chains" value="N/b=35-239"/>
</dbReference>
<dbReference type="PDB" id="5LF3">
    <property type="method" value="X-ray"/>
    <property type="resolution" value="2.10 A"/>
    <property type="chains" value="N/b=36-239"/>
</dbReference>
<dbReference type="PDB" id="5LF4">
    <property type="method" value="X-ray"/>
    <property type="resolution" value="1.99 A"/>
    <property type="chains" value="N/b=35-239"/>
</dbReference>
<dbReference type="PDB" id="5LF6">
    <property type="method" value="X-ray"/>
    <property type="resolution" value="2.07 A"/>
    <property type="chains" value="N/b=35-239"/>
</dbReference>
<dbReference type="PDB" id="5LF7">
    <property type="method" value="X-ray"/>
    <property type="resolution" value="2.00 A"/>
    <property type="chains" value="N/b=35-239"/>
</dbReference>
<dbReference type="PDB" id="5LN3">
    <property type="method" value="EM"/>
    <property type="resolution" value="6.80 A"/>
    <property type="chains" value="1=1-239"/>
</dbReference>
<dbReference type="PDB" id="5M32">
    <property type="method" value="EM"/>
    <property type="resolution" value="3.80 A"/>
    <property type="chains" value="N/b=1-239"/>
</dbReference>
<dbReference type="PDB" id="5T0C">
    <property type="method" value="EM"/>
    <property type="resolution" value="3.80 A"/>
    <property type="chains" value="AN/BN=2-239"/>
</dbReference>
<dbReference type="PDB" id="5T0G">
    <property type="method" value="EM"/>
    <property type="resolution" value="4.40 A"/>
    <property type="chains" value="N=2-239"/>
</dbReference>
<dbReference type="PDB" id="5T0H">
    <property type="method" value="EM"/>
    <property type="resolution" value="6.80 A"/>
    <property type="chains" value="N=2-239"/>
</dbReference>
<dbReference type="PDB" id="5T0I">
    <property type="method" value="EM"/>
    <property type="resolution" value="8.00 A"/>
    <property type="chains" value="N=2-239"/>
</dbReference>
<dbReference type="PDB" id="5T0J">
    <property type="method" value="EM"/>
    <property type="resolution" value="8.00 A"/>
    <property type="chains" value="N=2-239"/>
</dbReference>
<dbReference type="PDB" id="5VFO">
    <property type="method" value="EM"/>
    <property type="resolution" value="3.50 A"/>
    <property type="chains" value="N/n=35-225"/>
</dbReference>
<dbReference type="PDB" id="5VFP">
    <property type="method" value="EM"/>
    <property type="resolution" value="4.20 A"/>
    <property type="chains" value="N/n=35-225"/>
</dbReference>
<dbReference type="PDB" id="5VFQ">
    <property type="method" value="EM"/>
    <property type="resolution" value="4.20 A"/>
    <property type="chains" value="N/n=35-225"/>
</dbReference>
<dbReference type="PDB" id="5VFR">
    <property type="method" value="EM"/>
    <property type="resolution" value="4.90 A"/>
    <property type="chains" value="N/n=35-225"/>
</dbReference>
<dbReference type="PDB" id="5VFS">
    <property type="method" value="EM"/>
    <property type="resolution" value="3.60 A"/>
    <property type="chains" value="N/n=35-225"/>
</dbReference>
<dbReference type="PDB" id="5VFT">
    <property type="method" value="EM"/>
    <property type="resolution" value="7.00 A"/>
    <property type="chains" value="N/n=35-225"/>
</dbReference>
<dbReference type="PDB" id="5VFU">
    <property type="method" value="EM"/>
    <property type="resolution" value="5.80 A"/>
    <property type="chains" value="N/n=35-225"/>
</dbReference>
<dbReference type="PDB" id="6KWY">
    <property type="method" value="EM"/>
    <property type="resolution" value="2.72 A"/>
    <property type="chains" value="N/b=1-239"/>
</dbReference>
<dbReference type="PDB" id="6MSB">
    <property type="method" value="EM"/>
    <property type="resolution" value="3.00 A"/>
    <property type="chains" value="N/n=2-239"/>
</dbReference>
<dbReference type="PDB" id="6MSD">
    <property type="method" value="EM"/>
    <property type="resolution" value="3.20 A"/>
    <property type="chains" value="N/n=2-239"/>
</dbReference>
<dbReference type="PDB" id="6MSE">
    <property type="method" value="EM"/>
    <property type="resolution" value="3.30 A"/>
    <property type="chains" value="N/n=2-239"/>
</dbReference>
<dbReference type="PDB" id="6MSG">
    <property type="method" value="EM"/>
    <property type="resolution" value="3.50 A"/>
    <property type="chains" value="N/n=2-239"/>
</dbReference>
<dbReference type="PDB" id="6MSH">
    <property type="method" value="EM"/>
    <property type="resolution" value="3.60 A"/>
    <property type="chains" value="N/n=2-239"/>
</dbReference>
<dbReference type="PDB" id="6MSJ">
    <property type="method" value="EM"/>
    <property type="resolution" value="3.30 A"/>
    <property type="chains" value="N/n=2-239"/>
</dbReference>
<dbReference type="PDB" id="6MSK">
    <property type="method" value="EM"/>
    <property type="resolution" value="3.20 A"/>
    <property type="chains" value="N/n=2-239"/>
</dbReference>
<dbReference type="PDB" id="6R70">
    <property type="method" value="EM"/>
    <property type="resolution" value="3.50 A"/>
    <property type="chains" value="N/b=35-237"/>
</dbReference>
<dbReference type="PDB" id="6REY">
    <property type="method" value="EM"/>
    <property type="resolution" value="3.00 A"/>
    <property type="chains" value="H/V=35-239"/>
</dbReference>
<dbReference type="PDB" id="6RGQ">
    <property type="method" value="EM"/>
    <property type="resolution" value="2.60 A"/>
    <property type="chains" value="H/V=35-239"/>
</dbReference>
<dbReference type="PDB" id="6WJD">
    <property type="method" value="EM"/>
    <property type="resolution" value="4.80 A"/>
    <property type="chains" value="N/n=2-239"/>
</dbReference>
<dbReference type="PDB" id="6WJN">
    <property type="method" value="EM"/>
    <property type="resolution" value="5.70 A"/>
    <property type="chains" value="N/n=35-225"/>
</dbReference>
<dbReference type="PDB" id="6XMJ">
    <property type="method" value="EM"/>
    <property type="resolution" value="3.00 A"/>
    <property type="chains" value="H=35-236"/>
</dbReference>
<dbReference type="PDB" id="7LXV">
    <property type="method" value="EM"/>
    <property type="resolution" value="3.40 A"/>
    <property type="chains" value="N/b=35-239"/>
</dbReference>
<dbReference type="PDB" id="7NAN">
    <property type="method" value="EM"/>
    <property type="resolution" value="2.80 A"/>
    <property type="chains" value="N/b=1-239"/>
</dbReference>
<dbReference type="PDB" id="7NAO">
    <property type="method" value="EM"/>
    <property type="resolution" value="2.90 A"/>
    <property type="chains" value="N/b=1-239"/>
</dbReference>
<dbReference type="PDB" id="7NAP">
    <property type="method" value="EM"/>
    <property type="resolution" value="3.20 A"/>
    <property type="chains" value="N/b=1-239"/>
</dbReference>
<dbReference type="PDB" id="7NAQ">
    <property type="method" value="EM"/>
    <property type="resolution" value="3.20 A"/>
    <property type="chains" value="N/b=1-239"/>
</dbReference>
<dbReference type="PDB" id="7NHT">
    <property type="method" value="EM"/>
    <property type="resolution" value="2.80 A"/>
    <property type="chains" value="N=1-239"/>
</dbReference>
<dbReference type="PDB" id="7PG9">
    <property type="method" value="EM"/>
    <property type="resolution" value="3.70 A"/>
    <property type="chains" value="H/V=35-239"/>
</dbReference>
<dbReference type="PDB" id="7QXN">
    <property type="method" value="EM"/>
    <property type="resolution" value="3.70 A"/>
    <property type="chains" value="N/n=2-239"/>
</dbReference>
<dbReference type="PDB" id="7QXP">
    <property type="method" value="EM"/>
    <property type="resolution" value="3.60 A"/>
    <property type="chains" value="N/n=2-239"/>
</dbReference>
<dbReference type="PDB" id="7QXU">
    <property type="method" value="EM"/>
    <property type="resolution" value="4.30 A"/>
    <property type="chains" value="N/n=2-239"/>
</dbReference>
<dbReference type="PDB" id="7QXW">
    <property type="method" value="EM"/>
    <property type="resolution" value="4.10 A"/>
    <property type="chains" value="N/n=2-239"/>
</dbReference>
<dbReference type="PDB" id="7QXX">
    <property type="method" value="EM"/>
    <property type="resolution" value="4.40 A"/>
    <property type="chains" value="N/n=2-239"/>
</dbReference>
<dbReference type="PDB" id="7QY7">
    <property type="method" value="EM"/>
    <property type="resolution" value="4.70 A"/>
    <property type="chains" value="N/n=2-239"/>
</dbReference>
<dbReference type="PDB" id="7QYA">
    <property type="method" value="EM"/>
    <property type="resolution" value="4.80 A"/>
    <property type="chains" value="N/n=2-239"/>
</dbReference>
<dbReference type="PDB" id="7QYB">
    <property type="method" value="EM"/>
    <property type="resolution" value="4.10 A"/>
    <property type="chains" value="N/n=2-239"/>
</dbReference>
<dbReference type="PDB" id="7V5G">
    <property type="method" value="EM"/>
    <property type="resolution" value="4.47 A"/>
    <property type="chains" value="A/H=35-239"/>
</dbReference>
<dbReference type="PDB" id="7V5M">
    <property type="method" value="EM"/>
    <property type="resolution" value="3.88 A"/>
    <property type="chains" value="H/V=35-239"/>
</dbReference>
<dbReference type="PDB" id="7W37">
    <property type="method" value="EM"/>
    <property type="resolution" value="3.00 A"/>
    <property type="chains" value="N/n=1-239"/>
</dbReference>
<dbReference type="PDB" id="7W38">
    <property type="method" value="EM"/>
    <property type="resolution" value="3.10 A"/>
    <property type="chains" value="N/n=1-239"/>
</dbReference>
<dbReference type="PDB" id="7W39">
    <property type="method" value="EM"/>
    <property type="resolution" value="3.20 A"/>
    <property type="chains" value="N/n=1-239"/>
</dbReference>
<dbReference type="PDB" id="7W3A">
    <property type="method" value="EM"/>
    <property type="resolution" value="3.50 A"/>
    <property type="chains" value="N/n=1-239"/>
</dbReference>
<dbReference type="PDB" id="7W3B">
    <property type="method" value="EM"/>
    <property type="resolution" value="3.60 A"/>
    <property type="chains" value="N/n=1-239"/>
</dbReference>
<dbReference type="PDB" id="7W3C">
    <property type="method" value="EM"/>
    <property type="resolution" value="3.40 A"/>
    <property type="chains" value="N/n=1-239"/>
</dbReference>
<dbReference type="PDB" id="7W3F">
    <property type="method" value="EM"/>
    <property type="resolution" value="3.30 A"/>
    <property type="chains" value="N/n=1-239"/>
</dbReference>
<dbReference type="PDB" id="7W3G">
    <property type="method" value="EM"/>
    <property type="resolution" value="3.20 A"/>
    <property type="chains" value="N/n=1-239"/>
</dbReference>
<dbReference type="PDB" id="7W3H">
    <property type="method" value="EM"/>
    <property type="resolution" value="3.20 A"/>
    <property type="chains" value="N/n=1-239"/>
</dbReference>
<dbReference type="PDB" id="7W3I">
    <property type="method" value="EM"/>
    <property type="resolution" value="3.50 A"/>
    <property type="chains" value="N/n=1-239"/>
</dbReference>
<dbReference type="PDB" id="7W3J">
    <property type="method" value="EM"/>
    <property type="resolution" value="3.50 A"/>
    <property type="chains" value="N/n=1-239"/>
</dbReference>
<dbReference type="PDB" id="7W3K">
    <property type="method" value="EM"/>
    <property type="resolution" value="3.60 A"/>
    <property type="chains" value="N/n=1-239"/>
</dbReference>
<dbReference type="PDB" id="7W3M">
    <property type="method" value="EM"/>
    <property type="resolution" value="3.50 A"/>
    <property type="chains" value="N/n=1-239"/>
</dbReference>
<dbReference type="PDB" id="8BZL">
    <property type="method" value="X-ray"/>
    <property type="resolution" value="2.14 A"/>
    <property type="chains" value="N/b=1-239"/>
</dbReference>
<dbReference type="PDB" id="8CVR">
    <property type="method" value="EM"/>
    <property type="resolution" value="2.70 A"/>
    <property type="chains" value="H/V=35-239"/>
</dbReference>
<dbReference type="PDB" id="8CVS">
    <property type="method" value="EM"/>
    <property type="resolution" value="3.10 A"/>
    <property type="chains" value="N/b=35-239"/>
</dbReference>
<dbReference type="PDB" id="8CVT">
    <property type="method" value="EM"/>
    <property type="resolution" value="3.00 A"/>
    <property type="chains" value="N/n=1-239"/>
</dbReference>
<dbReference type="PDB" id="8CXB">
    <property type="method" value="EM"/>
    <property type="resolution" value="2.90 A"/>
    <property type="chains" value="N/b=1-239"/>
</dbReference>
<dbReference type="PDB" id="8QYN">
    <property type="method" value="EM"/>
    <property type="resolution" value="2.88 A"/>
    <property type="chains" value="Q=1-239"/>
</dbReference>
<dbReference type="PDB" id="8QYO">
    <property type="method" value="EM"/>
    <property type="resolution" value="2.84 A"/>
    <property type="chains" value="N/b=1-239"/>
</dbReference>
<dbReference type="PDB" id="8QYS">
    <property type="method" value="EM"/>
    <property type="resolution" value="3.89 A"/>
    <property type="chains" value="Q/h=35-231"/>
</dbReference>
<dbReference type="PDB" id="8TM6">
    <property type="method" value="EM"/>
    <property type="resolution" value="2.80 A"/>
    <property type="chains" value="N/b=1-239"/>
</dbReference>
<dbReference type="PDB" id="8UD9">
    <property type="method" value="EM"/>
    <property type="resolution" value="2.04 A"/>
    <property type="chains" value="H/V=35-239"/>
</dbReference>
<dbReference type="PDB" id="8YIX">
    <property type="method" value="EM"/>
    <property type="resolution" value="2.91 A"/>
    <property type="chains" value="N=1-239"/>
</dbReference>
<dbReference type="PDB" id="8YIY">
    <property type="method" value="EM"/>
    <property type="resolution" value="3.41 A"/>
    <property type="chains" value="N/b=1-239"/>
</dbReference>
<dbReference type="PDB" id="8YIZ">
    <property type="method" value="EM"/>
    <property type="resolution" value="3.79 A"/>
    <property type="chains" value="N/b=1-239"/>
</dbReference>
<dbReference type="PDB" id="9E8G">
    <property type="method" value="EM"/>
    <property type="resolution" value="3.01 A"/>
    <property type="chains" value="N=1-239"/>
</dbReference>
<dbReference type="PDB" id="9E8O">
    <property type="method" value="EM"/>
    <property type="resolution" value="3.10 A"/>
    <property type="chains" value="N=1-239"/>
</dbReference>
<dbReference type="PDB" id="9E8Q">
    <property type="method" value="EM"/>
    <property type="resolution" value="3.16 A"/>
    <property type="chains" value="N=1-239"/>
</dbReference>
<dbReference type="PDB" id="9HMN">
    <property type="method" value="EM"/>
    <property type="resolution" value="2.55 A"/>
    <property type="chains" value="H/Z=35-239"/>
</dbReference>
<dbReference type="PDBsum" id="4R3O"/>
<dbReference type="PDBsum" id="4R67"/>
<dbReference type="PDBsum" id="5A0Q"/>
<dbReference type="PDBsum" id="5GJQ"/>
<dbReference type="PDBsum" id="5GJR"/>
<dbReference type="PDBsum" id="5L4G"/>
<dbReference type="PDBsum" id="5LE5"/>
<dbReference type="PDBsum" id="5LEX"/>
<dbReference type="PDBsum" id="5LEY"/>
<dbReference type="PDBsum" id="5LEZ"/>
<dbReference type="PDBsum" id="5LF0"/>
<dbReference type="PDBsum" id="5LF1"/>
<dbReference type="PDBsum" id="5LF3"/>
<dbReference type="PDBsum" id="5LF4"/>
<dbReference type="PDBsum" id="5LF6"/>
<dbReference type="PDBsum" id="5LF7"/>
<dbReference type="PDBsum" id="5LN3"/>
<dbReference type="PDBsum" id="5M32"/>
<dbReference type="PDBsum" id="5T0C"/>
<dbReference type="PDBsum" id="5T0G"/>
<dbReference type="PDBsum" id="5T0H"/>
<dbReference type="PDBsum" id="5T0I"/>
<dbReference type="PDBsum" id="5T0J"/>
<dbReference type="PDBsum" id="5VFO"/>
<dbReference type="PDBsum" id="5VFP"/>
<dbReference type="PDBsum" id="5VFQ"/>
<dbReference type="PDBsum" id="5VFR"/>
<dbReference type="PDBsum" id="5VFS"/>
<dbReference type="PDBsum" id="5VFT"/>
<dbReference type="PDBsum" id="5VFU"/>
<dbReference type="PDBsum" id="6KWY"/>
<dbReference type="PDBsum" id="6MSB"/>
<dbReference type="PDBsum" id="6MSD"/>
<dbReference type="PDBsum" id="6MSE"/>
<dbReference type="PDBsum" id="6MSG"/>
<dbReference type="PDBsum" id="6MSH"/>
<dbReference type="PDBsum" id="6MSJ"/>
<dbReference type="PDBsum" id="6MSK"/>
<dbReference type="PDBsum" id="6R70"/>
<dbReference type="PDBsum" id="6REY"/>
<dbReference type="PDBsum" id="6RGQ"/>
<dbReference type="PDBsum" id="6WJD"/>
<dbReference type="PDBsum" id="6WJN"/>
<dbReference type="PDBsum" id="6XMJ"/>
<dbReference type="PDBsum" id="7LXV"/>
<dbReference type="PDBsum" id="7NAN"/>
<dbReference type="PDBsum" id="7NAO"/>
<dbReference type="PDBsum" id="7NAP"/>
<dbReference type="PDBsum" id="7NAQ"/>
<dbReference type="PDBsum" id="7NHT"/>
<dbReference type="PDBsum" id="7PG9"/>
<dbReference type="PDBsum" id="7QXN"/>
<dbReference type="PDBsum" id="7QXP"/>
<dbReference type="PDBsum" id="7QXU"/>
<dbReference type="PDBsum" id="7QXW"/>
<dbReference type="PDBsum" id="7QXX"/>
<dbReference type="PDBsum" id="7QY7"/>
<dbReference type="PDBsum" id="7QYA"/>
<dbReference type="PDBsum" id="7QYB"/>
<dbReference type="PDBsum" id="7V5G"/>
<dbReference type="PDBsum" id="7V5M"/>
<dbReference type="PDBsum" id="7W37"/>
<dbReference type="PDBsum" id="7W38"/>
<dbReference type="PDBsum" id="7W39"/>
<dbReference type="PDBsum" id="7W3A"/>
<dbReference type="PDBsum" id="7W3B"/>
<dbReference type="PDBsum" id="7W3C"/>
<dbReference type="PDBsum" id="7W3F"/>
<dbReference type="PDBsum" id="7W3G"/>
<dbReference type="PDBsum" id="7W3H"/>
<dbReference type="PDBsum" id="7W3I"/>
<dbReference type="PDBsum" id="7W3J"/>
<dbReference type="PDBsum" id="7W3K"/>
<dbReference type="PDBsum" id="7W3M"/>
<dbReference type="PDBsum" id="8BZL"/>
<dbReference type="PDBsum" id="8CVR"/>
<dbReference type="PDBsum" id="8CVS"/>
<dbReference type="PDBsum" id="8CVT"/>
<dbReference type="PDBsum" id="8CXB"/>
<dbReference type="PDBsum" id="8QYN"/>
<dbReference type="PDBsum" id="8QYO"/>
<dbReference type="PDBsum" id="8QYS"/>
<dbReference type="PDBsum" id="8TM6"/>
<dbReference type="PDBsum" id="8UD9"/>
<dbReference type="PDBsum" id="8YIX"/>
<dbReference type="PDBsum" id="8YIY"/>
<dbReference type="PDBsum" id="8YIZ"/>
<dbReference type="PDBsum" id="9E8G"/>
<dbReference type="PDBsum" id="9E8O"/>
<dbReference type="PDBsum" id="9E8Q"/>
<dbReference type="PDBsum" id="9HMN"/>
<dbReference type="EMDB" id="EMD-0781"/>
<dbReference type="EMDB" id="EMD-12341"/>
<dbReference type="EMDB" id="EMD-13389"/>
<dbReference type="EMDB" id="EMD-14201"/>
<dbReference type="EMDB" id="EMD-14202"/>
<dbReference type="EMDB" id="EMD-14203"/>
<dbReference type="EMDB" id="EMD-14204"/>
<dbReference type="EMDB" id="EMD-14205"/>
<dbReference type="EMDB" id="EMD-14209"/>
<dbReference type="EMDB" id="EMD-14210"/>
<dbReference type="EMDB" id="EMD-14211"/>
<dbReference type="EMDB" id="EMD-18759"/>
<dbReference type="EMDB" id="EMD-18760"/>
<dbReference type="EMDB" id="EMD-18761"/>
<dbReference type="EMDB" id="EMD-21691"/>
<dbReference type="EMDB" id="EMD-21696"/>
<dbReference type="EMDB" id="EMD-22259"/>
<dbReference type="EMDB" id="EMD-23576"/>
<dbReference type="EMDB" id="EMD-24275"/>
<dbReference type="EMDB" id="EMD-24276"/>
<dbReference type="EMDB" id="EMD-24277"/>
<dbReference type="EMDB" id="EMD-24278"/>
<dbReference type="EMDB" id="EMD-27013"/>
<dbReference type="EMDB" id="EMD-27015"/>
<dbReference type="EMDB" id="EMD-27018"/>
<dbReference type="EMDB" id="EMD-2981"/>
<dbReference type="EMDB" id="EMD-31724"/>
<dbReference type="EMDB" id="EMD-31727"/>
<dbReference type="EMDB" id="EMD-32272"/>
<dbReference type="EMDB" id="EMD-32273"/>
<dbReference type="EMDB" id="EMD-32274"/>
<dbReference type="EMDB" id="EMD-32275"/>
<dbReference type="EMDB" id="EMD-32276"/>
<dbReference type="EMDB" id="EMD-32277"/>
<dbReference type="EMDB" id="EMD-32278"/>
<dbReference type="EMDB" id="EMD-32279"/>
<dbReference type="EMDB" id="EMD-32280"/>
<dbReference type="EMDB" id="EMD-32281"/>
<dbReference type="EMDB" id="EMD-32282"/>
<dbReference type="EMDB" id="EMD-32283"/>
<dbReference type="EMDB" id="EMD-32284"/>
<dbReference type="EMDB" id="EMD-39332"/>
<dbReference type="EMDB" id="EMD-39333"/>
<dbReference type="EMDB" id="EMD-39334"/>
<dbReference type="EMDB" id="EMD-4089"/>
<dbReference type="EMDB" id="EMD-41380"/>
<dbReference type="EMDB" id="EMD-42148"/>
<dbReference type="EMDB" id="EMD-4738"/>
<dbReference type="EMDB" id="EMD-47719"/>
<dbReference type="EMDB" id="EMD-47726"/>
<dbReference type="EMDB" id="EMD-47727"/>
<dbReference type="EMDB" id="EMD-4860"/>
<dbReference type="EMDB" id="EMD-4877"/>
<dbReference type="EMDB" id="EMD-52296"/>
<dbReference type="EMDB" id="EMD-60138"/>
<dbReference type="EMDB" id="EMD-8662"/>
<dbReference type="EMDB" id="EMD-8663"/>
<dbReference type="EMDB" id="EMD-8664"/>
<dbReference type="EMDB" id="EMD-8665"/>
<dbReference type="EMDB" id="EMD-8666"/>
<dbReference type="EMDB" id="EMD-8667"/>
<dbReference type="EMDB" id="EMD-8668"/>
<dbReference type="EMDB" id="EMD-9216"/>
<dbReference type="EMDB" id="EMD-9217"/>
<dbReference type="EMDB" id="EMD-9218"/>
<dbReference type="EMDB" id="EMD-9219"/>
<dbReference type="EMDB" id="EMD-9220"/>
<dbReference type="EMDB" id="EMD-9221"/>
<dbReference type="EMDB" id="EMD-9222"/>
<dbReference type="EMDB" id="EMD-9512"/>
<dbReference type="SMR" id="P28072"/>
<dbReference type="BioGRID" id="111667">
    <property type="interactions" value="260"/>
</dbReference>
<dbReference type="ComplexPortal" id="CPX-5993">
    <property type="entry name" value="26S proteasome complex"/>
</dbReference>
<dbReference type="ComplexPortal" id="CPX-8806">
    <property type="entry name" value="20S proteasome complex"/>
</dbReference>
<dbReference type="ComplexPortal" id="CPX-8841">
    <property type="entry name" value="PA200-20S single-capped proteasome"/>
</dbReference>
<dbReference type="ComplexPortal" id="CPX-8842">
    <property type="entry name" value="PA28-alphabeta double-capped 20S proteasome complex"/>
</dbReference>
<dbReference type="ComplexPortal" id="CPX-9001">
    <property type="entry name" value="PA28-gamma single-capped 20S proteasome complex"/>
</dbReference>
<dbReference type="ComplexPortal" id="CPX-9002">
    <property type="entry name" value="PA28-alphabeta single-capped 20S proteasome complex"/>
</dbReference>
<dbReference type="ComplexPortal" id="CPX-9021">
    <property type="entry name" value="20S spermatoproteasome complex"/>
</dbReference>
<dbReference type="ComplexPortal" id="CPX-9022">
    <property type="entry name" value="PA28-gamma double-capped 20S proteasome complex"/>
</dbReference>
<dbReference type="ComplexPortal" id="CPX-9063">
    <property type="entry name" value="PA200-20S-PA200 double-capped proteasome complex"/>
</dbReference>
<dbReference type="ComplexPortal" id="CPX-9082">
    <property type="entry name" value="19S-20S-PA28-alphabeta hybrid proteasome complex"/>
</dbReference>
<dbReference type="ComplexPortal" id="CPX-9085">
    <property type="entry name" value="19S-20S-PA28-gamma hybrid proteasome complex"/>
</dbReference>
<dbReference type="ComplexPortal" id="CPX-9086">
    <property type="entry name" value="30S proteasome complex"/>
</dbReference>
<dbReference type="CORUM" id="P28072"/>
<dbReference type="DIP" id="DIP-33847N"/>
<dbReference type="FunCoup" id="P28072">
    <property type="interactions" value="2523"/>
</dbReference>
<dbReference type="IntAct" id="P28072">
    <property type="interactions" value="77"/>
</dbReference>
<dbReference type="MINT" id="P28072"/>
<dbReference type="STRING" id="9606.ENSP00000270586"/>
<dbReference type="BindingDB" id="P28072"/>
<dbReference type="ChEMBL" id="CHEMBL1944496"/>
<dbReference type="DrugBank" id="DB08515">
    <property type="generic name" value="(3AR,6R,6AS)-6-((S)-((S)-CYCLOHEX-2-ENYL)(HYDROXY)METHYL)-6A-METHYL-4-OXO-HEXAHYDRO-2H-FURO[3,2-C]PYRROLE-6-CARBALDEHYDE"/>
</dbReference>
<dbReference type="MEROPS" id="T01.010"/>
<dbReference type="GlyGen" id="P28072">
    <property type="glycosylation" value="1 site, 1 O-linked glycan (1 site)"/>
</dbReference>
<dbReference type="iPTMnet" id="P28072"/>
<dbReference type="PhosphoSitePlus" id="P28072"/>
<dbReference type="SwissPalm" id="P28072"/>
<dbReference type="BioMuta" id="PSMB6"/>
<dbReference type="DMDM" id="20532407"/>
<dbReference type="OGP" id="P28072"/>
<dbReference type="jPOST" id="P28072"/>
<dbReference type="MassIVE" id="P28072"/>
<dbReference type="PaxDb" id="9606-ENSP00000270586"/>
<dbReference type="PeptideAtlas" id="P28072"/>
<dbReference type="ProteomicsDB" id="54447"/>
<dbReference type="Pumba" id="P28072"/>
<dbReference type="Antibodypedia" id="11325">
    <property type="antibodies" value="151 antibodies from 29 providers"/>
</dbReference>
<dbReference type="DNASU" id="5694"/>
<dbReference type="Ensembl" id="ENST00000270586.8">
    <property type="protein sequence ID" value="ENSP00000270586.3"/>
    <property type="gene ID" value="ENSG00000142507.10"/>
</dbReference>
<dbReference type="GeneID" id="5694"/>
<dbReference type="KEGG" id="hsa:5694"/>
<dbReference type="MANE-Select" id="ENST00000270586.8">
    <property type="protein sequence ID" value="ENSP00000270586.3"/>
    <property type="RefSeq nucleotide sequence ID" value="NM_002798.3"/>
    <property type="RefSeq protein sequence ID" value="NP_002789.1"/>
</dbReference>
<dbReference type="AGR" id="HGNC:9543"/>
<dbReference type="CTD" id="5694"/>
<dbReference type="DisGeNET" id="5694"/>
<dbReference type="GeneCards" id="PSMB6"/>
<dbReference type="HGNC" id="HGNC:9543">
    <property type="gene designation" value="PSMB6"/>
</dbReference>
<dbReference type="HPA" id="ENSG00000142507">
    <property type="expression patterns" value="Low tissue specificity"/>
</dbReference>
<dbReference type="MIM" id="600307">
    <property type="type" value="gene"/>
</dbReference>
<dbReference type="neXtProt" id="NX_P28072"/>
<dbReference type="OpenTargets" id="ENSG00000142507"/>
<dbReference type="PharmGKB" id="PA33888"/>
<dbReference type="VEuPathDB" id="HostDB:ENSG00000142507"/>
<dbReference type="eggNOG" id="KOG0174">
    <property type="taxonomic scope" value="Eukaryota"/>
</dbReference>
<dbReference type="GeneTree" id="ENSGT00940000155114"/>
<dbReference type="HOGENOM" id="CLU_035750_5_2_1"/>
<dbReference type="InParanoid" id="P28072"/>
<dbReference type="OMA" id="TFIYGYC"/>
<dbReference type="OrthoDB" id="7854943at2759"/>
<dbReference type="PAN-GO" id="P28072">
    <property type="GO annotations" value="4 GO annotations based on evolutionary models"/>
</dbReference>
<dbReference type="PhylomeDB" id="P28072"/>
<dbReference type="TreeFam" id="TF106221"/>
<dbReference type="PathwayCommons" id="P28072"/>
<dbReference type="Reactome" id="R-HSA-1169091">
    <property type="pathway name" value="Activation of NF-kappaB in B cells"/>
</dbReference>
<dbReference type="Reactome" id="R-HSA-1234176">
    <property type="pathway name" value="Oxygen-dependent proline hydroxylation of Hypoxia-inducible Factor Alpha"/>
</dbReference>
<dbReference type="Reactome" id="R-HSA-1236974">
    <property type="pathway name" value="ER-Phagosome pathway"/>
</dbReference>
<dbReference type="Reactome" id="R-HSA-1236978">
    <property type="pathway name" value="Cross-presentation of soluble exogenous antigens (endosomes)"/>
</dbReference>
<dbReference type="Reactome" id="R-HSA-174084">
    <property type="pathway name" value="Autodegradation of Cdh1 by Cdh1:APC/C"/>
</dbReference>
<dbReference type="Reactome" id="R-HSA-174113">
    <property type="pathway name" value="SCF-beta-TrCP mediated degradation of Emi1"/>
</dbReference>
<dbReference type="Reactome" id="R-HSA-174154">
    <property type="pathway name" value="APC/C:Cdc20 mediated degradation of Securin"/>
</dbReference>
<dbReference type="Reactome" id="R-HSA-174178">
    <property type="pathway name" value="APC/C:Cdh1 mediated degradation of Cdc20 and other APC/C:Cdh1 targeted proteins in late mitosis/early G1"/>
</dbReference>
<dbReference type="Reactome" id="R-HSA-174184">
    <property type="pathway name" value="Cdc20:Phospho-APC/C mediated degradation of Cyclin A"/>
</dbReference>
<dbReference type="Reactome" id="R-HSA-180534">
    <property type="pathway name" value="Vpu mediated degradation of CD4"/>
</dbReference>
<dbReference type="Reactome" id="R-HSA-180585">
    <property type="pathway name" value="Vif-mediated degradation of APOBEC3G"/>
</dbReference>
<dbReference type="Reactome" id="R-HSA-187577">
    <property type="pathway name" value="SCF(Skp2)-mediated degradation of p27/p21"/>
</dbReference>
<dbReference type="Reactome" id="R-HSA-195253">
    <property type="pathway name" value="Degradation of beta-catenin by the destruction complex"/>
</dbReference>
<dbReference type="Reactome" id="R-HSA-202424">
    <property type="pathway name" value="Downstream TCR signaling"/>
</dbReference>
<dbReference type="Reactome" id="R-HSA-211733">
    <property type="pathway name" value="Regulation of activated PAK-2p34 by proteasome mediated degradation"/>
</dbReference>
<dbReference type="Reactome" id="R-HSA-2467813">
    <property type="pathway name" value="Separation of Sister Chromatids"/>
</dbReference>
<dbReference type="Reactome" id="R-HSA-2871837">
    <property type="pathway name" value="FCERI mediated NF-kB activation"/>
</dbReference>
<dbReference type="Reactome" id="R-HSA-349425">
    <property type="pathway name" value="Autodegradation of the E3 ubiquitin ligase COP1"/>
</dbReference>
<dbReference type="Reactome" id="R-HSA-350562">
    <property type="pathway name" value="Regulation of ornithine decarboxylase (ODC)"/>
</dbReference>
<dbReference type="Reactome" id="R-HSA-382556">
    <property type="pathway name" value="ABC-family proteins mediated transport"/>
</dbReference>
<dbReference type="Reactome" id="R-HSA-450408">
    <property type="pathway name" value="AUF1 (hnRNP D0) binds and destabilizes mRNA"/>
</dbReference>
<dbReference type="Reactome" id="R-HSA-4608870">
    <property type="pathway name" value="Asymmetric localization of PCP proteins"/>
</dbReference>
<dbReference type="Reactome" id="R-HSA-4641257">
    <property type="pathway name" value="Degradation of AXIN"/>
</dbReference>
<dbReference type="Reactome" id="R-HSA-4641258">
    <property type="pathway name" value="Degradation of DVL"/>
</dbReference>
<dbReference type="Reactome" id="R-HSA-5358346">
    <property type="pathway name" value="Hedgehog ligand biogenesis"/>
</dbReference>
<dbReference type="Reactome" id="R-HSA-5362768">
    <property type="pathway name" value="Hh mutants are degraded by ERAD"/>
</dbReference>
<dbReference type="Reactome" id="R-HSA-5607761">
    <property type="pathway name" value="Dectin-1 mediated noncanonical NF-kB signaling"/>
</dbReference>
<dbReference type="Reactome" id="R-HSA-5607764">
    <property type="pathway name" value="CLEC7A (Dectin-1) signaling"/>
</dbReference>
<dbReference type="Reactome" id="R-HSA-5610780">
    <property type="pathway name" value="Degradation of GLI1 by the proteasome"/>
</dbReference>
<dbReference type="Reactome" id="R-HSA-5610783">
    <property type="pathway name" value="Degradation of GLI2 by the proteasome"/>
</dbReference>
<dbReference type="Reactome" id="R-HSA-5610785">
    <property type="pathway name" value="GLI3 is processed to GLI3R by the proteasome"/>
</dbReference>
<dbReference type="Reactome" id="R-HSA-5632684">
    <property type="pathway name" value="Hedgehog 'on' state"/>
</dbReference>
<dbReference type="Reactome" id="R-HSA-5658442">
    <property type="pathway name" value="Regulation of RAS by GAPs"/>
</dbReference>
<dbReference type="Reactome" id="R-HSA-5668541">
    <property type="pathway name" value="TNFR2 non-canonical NF-kB pathway"/>
</dbReference>
<dbReference type="Reactome" id="R-HSA-5676590">
    <property type="pathway name" value="NIK--&gt;noncanonical NF-kB signaling"/>
</dbReference>
<dbReference type="Reactome" id="R-HSA-5678895">
    <property type="pathway name" value="Defective CFTR causes cystic fibrosis"/>
</dbReference>
<dbReference type="Reactome" id="R-HSA-5687128">
    <property type="pathway name" value="MAPK6/MAPK4 signaling"/>
</dbReference>
<dbReference type="Reactome" id="R-HSA-5689603">
    <property type="pathway name" value="UCH proteinases"/>
</dbReference>
<dbReference type="Reactome" id="R-HSA-5689880">
    <property type="pathway name" value="Ub-specific processing proteases"/>
</dbReference>
<dbReference type="Reactome" id="R-HSA-68867">
    <property type="pathway name" value="Assembly of the pre-replicative complex"/>
</dbReference>
<dbReference type="Reactome" id="R-HSA-68949">
    <property type="pathway name" value="Orc1 removal from chromatin"/>
</dbReference>
<dbReference type="Reactome" id="R-HSA-69017">
    <property type="pathway name" value="CDK-mediated phosphorylation and removal of Cdc6"/>
</dbReference>
<dbReference type="Reactome" id="R-HSA-69481">
    <property type="pathway name" value="G2/M Checkpoints"/>
</dbReference>
<dbReference type="Reactome" id="R-HSA-69601">
    <property type="pathway name" value="Ubiquitin Mediated Degradation of Phosphorylated Cdc25A"/>
</dbReference>
<dbReference type="Reactome" id="R-HSA-75815">
    <property type="pathway name" value="Ubiquitin-dependent degradation of Cyclin D"/>
</dbReference>
<dbReference type="Reactome" id="R-HSA-8852276">
    <property type="pathway name" value="The role of GTSE1 in G2/M progression after G2 checkpoint"/>
</dbReference>
<dbReference type="Reactome" id="R-HSA-8854050">
    <property type="pathway name" value="FBXL7 down-regulates AURKA during mitotic entry and in early mitosis"/>
</dbReference>
<dbReference type="Reactome" id="R-HSA-8939236">
    <property type="pathway name" value="RUNX1 regulates transcription of genes involved in differentiation of HSCs"/>
</dbReference>
<dbReference type="Reactome" id="R-HSA-8939902">
    <property type="pathway name" value="Regulation of RUNX2 expression and activity"/>
</dbReference>
<dbReference type="Reactome" id="R-HSA-8941858">
    <property type="pathway name" value="Regulation of RUNX3 expression and activity"/>
</dbReference>
<dbReference type="Reactome" id="R-HSA-8948751">
    <property type="pathway name" value="Regulation of PTEN stability and activity"/>
</dbReference>
<dbReference type="Reactome" id="R-HSA-8951664">
    <property type="pathway name" value="Neddylation"/>
</dbReference>
<dbReference type="Reactome" id="R-HSA-9010553">
    <property type="pathway name" value="Regulation of expression of SLITs and ROBOs"/>
</dbReference>
<dbReference type="Reactome" id="R-HSA-9020702">
    <property type="pathway name" value="Interleukin-1 signaling"/>
</dbReference>
<dbReference type="Reactome" id="R-HSA-9604323">
    <property type="pathway name" value="Negative regulation of NOTCH4 signaling"/>
</dbReference>
<dbReference type="Reactome" id="R-HSA-9755511">
    <property type="pathway name" value="KEAP1-NFE2L2 pathway"/>
</dbReference>
<dbReference type="Reactome" id="R-HSA-9762114">
    <property type="pathway name" value="GSK3B and BTRC:CUL1-mediated-degradation of NFE2L2"/>
</dbReference>
<dbReference type="Reactome" id="R-HSA-9824272">
    <property type="pathway name" value="Somitogenesis"/>
</dbReference>
<dbReference type="Reactome" id="R-HSA-983168">
    <property type="pathway name" value="Antigen processing: Ubiquitination &amp; Proteasome degradation"/>
</dbReference>
<dbReference type="Reactome" id="R-HSA-9907900">
    <property type="pathway name" value="Proteasome assembly"/>
</dbReference>
<dbReference type="SignaLink" id="P28072"/>
<dbReference type="SIGNOR" id="P28072"/>
<dbReference type="BioGRID-ORCS" id="5694">
    <property type="hits" value="787 hits in 1169 CRISPR screens"/>
</dbReference>
<dbReference type="CD-CODE" id="FB4E32DD">
    <property type="entry name" value="Presynaptic clusters and postsynaptic densities"/>
</dbReference>
<dbReference type="ChiTaRS" id="PSMB6">
    <property type="organism name" value="human"/>
</dbReference>
<dbReference type="EvolutionaryTrace" id="P28072"/>
<dbReference type="GeneWiki" id="PSMB6"/>
<dbReference type="GenomeRNAi" id="5694"/>
<dbReference type="Pharos" id="P28072">
    <property type="development level" value="Tbio"/>
</dbReference>
<dbReference type="PRO" id="PR:P28072"/>
<dbReference type="Proteomes" id="UP000005640">
    <property type="component" value="Chromosome 17"/>
</dbReference>
<dbReference type="RNAct" id="P28072">
    <property type="molecule type" value="protein"/>
</dbReference>
<dbReference type="Bgee" id="ENSG00000142507">
    <property type="expression patterns" value="Expressed in gastrocnemius and 214 other cell types or tissues"/>
</dbReference>
<dbReference type="ExpressionAtlas" id="P28072">
    <property type="expression patterns" value="baseline and differential"/>
</dbReference>
<dbReference type="GO" id="GO:0005737">
    <property type="term" value="C:cytoplasm"/>
    <property type="evidence" value="ECO:0000314"/>
    <property type="project" value="UniProtKB"/>
</dbReference>
<dbReference type="GO" id="GO:0005829">
    <property type="term" value="C:cytosol"/>
    <property type="evidence" value="ECO:0000314"/>
    <property type="project" value="HPA"/>
</dbReference>
<dbReference type="GO" id="GO:0070062">
    <property type="term" value="C:extracellular exosome"/>
    <property type="evidence" value="ECO:0007005"/>
    <property type="project" value="UniProtKB"/>
</dbReference>
<dbReference type="GO" id="GO:0005739">
    <property type="term" value="C:mitochondrion"/>
    <property type="evidence" value="ECO:0000314"/>
    <property type="project" value="HPA"/>
</dbReference>
<dbReference type="GO" id="GO:0005654">
    <property type="term" value="C:nucleoplasm"/>
    <property type="evidence" value="ECO:0000314"/>
    <property type="project" value="HPA"/>
</dbReference>
<dbReference type="GO" id="GO:0005634">
    <property type="term" value="C:nucleus"/>
    <property type="evidence" value="ECO:0000314"/>
    <property type="project" value="UniProtKB"/>
</dbReference>
<dbReference type="GO" id="GO:0000502">
    <property type="term" value="C:proteasome complex"/>
    <property type="evidence" value="ECO:0000314"/>
    <property type="project" value="UniProtKB"/>
</dbReference>
<dbReference type="GO" id="GO:0005839">
    <property type="term" value="C:proteasome core complex"/>
    <property type="evidence" value="ECO:0000314"/>
    <property type="project" value="UniProtKB"/>
</dbReference>
<dbReference type="GO" id="GO:0019774">
    <property type="term" value="C:proteasome core complex, beta-subunit complex"/>
    <property type="evidence" value="ECO:0000250"/>
    <property type="project" value="UniProtKB"/>
</dbReference>
<dbReference type="GO" id="GO:0045296">
    <property type="term" value="F:cadherin binding"/>
    <property type="evidence" value="ECO:0007005"/>
    <property type="project" value="BHF-UCL"/>
</dbReference>
<dbReference type="GO" id="GO:0004175">
    <property type="term" value="F:endopeptidase activity"/>
    <property type="evidence" value="ECO:0000318"/>
    <property type="project" value="GO_Central"/>
</dbReference>
<dbReference type="GO" id="GO:0004298">
    <property type="term" value="F:threonine-type endopeptidase activity"/>
    <property type="evidence" value="ECO:0007669"/>
    <property type="project" value="UniProtKB-KW"/>
</dbReference>
<dbReference type="GO" id="GO:0043161">
    <property type="term" value="P:proteasome-mediated ubiquitin-dependent protein catabolic process"/>
    <property type="evidence" value="ECO:0000318"/>
    <property type="project" value="GO_Central"/>
</dbReference>
<dbReference type="CDD" id="cd03762">
    <property type="entry name" value="proteasome_beta_type_6"/>
    <property type="match status" value="1"/>
</dbReference>
<dbReference type="FunFam" id="3.60.20.10:FF:000010">
    <property type="entry name" value="Proteasome subunit beta type-1"/>
    <property type="match status" value="1"/>
</dbReference>
<dbReference type="Gene3D" id="3.60.20.10">
    <property type="entry name" value="Glutamine Phosphoribosylpyrophosphate, subunit 1, domain 1"/>
    <property type="match status" value="1"/>
</dbReference>
<dbReference type="InterPro" id="IPR029055">
    <property type="entry name" value="Ntn_hydrolases_N"/>
</dbReference>
<dbReference type="InterPro" id="IPR000243">
    <property type="entry name" value="Pept_T1A_subB"/>
</dbReference>
<dbReference type="InterPro" id="IPR016050">
    <property type="entry name" value="Proteasome_bsu_CS"/>
</dbReference>
<dbReference type="InterPro" id="IPR001353">
    <property type="entry name" value="Proteasome_sua/b"/>
</dbReference>
<dbReference type="InterPro" id="IPR023333">
    <property type="entry name" value="Proteasome_suB-type"/>
</dbReference>
<dbReference type="PANTHER" id="PTHR32194">
    <property type="entry name" value="METALLOPROTEASE TLDD"/>
    <property type="match status" value="1"/>
</dbReference>
<dbReference type="PANTHER" id="PTHR32194:SF14">
    <property type="entry name" value="PROTEASOME SUBUNIT BETA"/>
    <property type="match status" value="1"/>
</dbReference>
<dbReference type="Pfam" id="PF00227">
    <property type="entry name" value="Proteasome"/>
    <property type="match status" value="1"/>
</dbReference>
<dbReference type="PRINTS" id="PR00141">
    <property type="entry name" value="PROTEASOME"/>
</dbReference>
<dbReference type="SUPFAM" id="SSF56235">
    <property type="entry name" value="N-terminal nucleophile aminohydrolases (Ntn hydrolases)"/>
    <property type="match status" value="1"/>
</dbReference>
<dbReference type="PROSITE" id="PS00854">
    <property type="entry name" value="PROTEASOME_BETA_1"/>
    <property type="match status" value="1"/>
</dbReference>
<dbReference type="PROSITE" id="PS51476">
    <property type="entry name" value="PROTEASOME_BETA_2"/>
    <property type="match status" value="1"/>
</dbReference>
<gene>
    <name evidence="21" type="primary">PSMB6</name>
    <name type="synonym">LMPY</name>
    <name type="synonym">Y</name>
</gene>
<protein>
    <recommendedName>
        <fullName evidence="20">Proteasome subunit beta type-6</fullName>
        <ecNumber evidence="10">3.4.25.1</ecNumber>
    </recommendedName>
    <alternativeName>
        <fullName>Macropain delta chain</fullName>
    </alternativeName>
    <alternativeName>
        <fullName>Multicatalytic endopeptidase complex delta chain</fullName>
    </alternativeName>
    <alternativeName>
        <fullName>Proteasome delta chain</fullName>
    </alternativeName>
    <alternativeName>
        <fullName>Proteasome subunit Y</fullName>
    </alternativeName>
    <alternativeName>
        <fullName evidence="19">Proteasome subunit beta-1</fullName>
        <shortName evidence="19">beta-1</shortName>
    </alternativeName>
</protein>
<accession>P28072</accession>
<accession>Q96J55</accession>
<feature type="initiator methionine" description="Removed" evidence="18 22">
    <location>
        <position position="1"/>
    </location>
</feature>
<feature type="propeptide" id="PRO_0000026613" description="Removed in mature form" evidence="6 7">
    <location>
        <begin position="2"/>
        <end position="34"/>
    </location>
</feature>
<feature type="chain" id="PRO_0000026614" description="Proteasome subunit beta type-6">
    <location>
        <begin position="35"/>
        <end position="239"/>
    </location>
</feature>
<feature type="active site" description="Nucleophile" evidence="8 13">
    <location>
        <position position="35"/>
    </location>
</feature>
<feature type="modified residue" description="N-acetylalanine" evidence="18 22">
    <location>
        <position position="2"/>
    </location>
</feature>
<feature type="modified residue" description="Phosphothreonine" evidence="23">
    <location>
        <position position="69"/>
    </location>
</feature>
<feature type="sequence variant" id="VAR_020030" description="In dbSNP:rs2304974.">
    <original>P</original>
    <variation>A</variation>
    <location>
        <position position="107"/>
    </location>
</feature>
<feature type="sequence conflict" description="In Ref. 1; BAA06098." evidence="20" ref="1">
    <original>V</original>
    <variation>G</variation>
    <location>
        <position position="145"/>
    </location>
</feature>
<feature type="helix" evidence="27">
    <location>
        <begin position="17"/>
        <end position="20"/>
    </location>
</feature>
<feature type="helix" evidence="27">
    <location>
        <begin position="26"/>
        <end position="28"/>
    </location>
</feature>
<feature type="strand" evidence="24">
    <location>
        <begin position="37"/>
        <end position="42"/>
    </location>
</feature>
<feature type="strand" evidence="24">
    <location>
        <begin position="45"/>
        <end position="50"/>
    </location>
</feature>
<feature type="strand" evidence="24">
    <location>
        <begin position="54"/>
        <end position="56"/>
    </location>
</feature>
<feature type="strand" evidence="24">
    <location>
        <begin position="59"/>
        <end position="64"/>
    </location>
</feature>
<feature type="strand" evidence="24">
    <location>
        <begin position="68"/>
        <end position="72"/>
    </location>
</feature>
<feature type="strand" evidence="24">
    <location>
        <begin position="75"/>
        <end position="81"/>
    </location>
</feature>
<feature type="helix" evidence="24">
    <location>
        <begin position="83"/>
        <end position="104"/>
    </location>
</feature>
<feature type="helix" evidence="24">
    <location>
        <begin position="110"/>
        <end position="123"/>
    </location>
</feature>
<feature type="helix" evidence="24">
    <location>
        <begin position="125"/>
        <end position="127"/>
    </location>
</feature>
<feature type="strand" evidence="24">
    <location>
        <begin position="130"/>
        <end position="138"/>
    </location>
</feature>
<feature type="turn" evidence="24">
    <location>
        <begin position="139"/>
        <end position="141"/>
    </location>
</feature>
<feature type="strand" evidence="24">
    <location>
        <begin position="142"/>
        <end position="148"/>
    </location>
</feature>
<feature type="turn" evidence="26">
    <location>
        <begin position="150"/>
        <end position="152"/>
    </location>
</feature>
<feature type="strand" evidence="24">
    <location>
        <begin position="158"/>
        <end position="163"/>
    </location>
</feature>
<feature type="helix" evidence="24">
    <location>
        <begin position="164"/>
        <end position="169"/>
    </location>
</feature>
<feature type="helix" evidence="24">
    <location>
        <begin position="170"/>
        <end position="176"/>
    </location>
</feature>
<feature type="helix" evidence="24">
    <location>
        <begin position="183"/>
        <end position="200"/>
    </location>
</feature>
<feature type="strand" evidence="25">
    <location>
        <begin position="201"/>
        <end position="204"/>
    </location>
</feature>
<feature type="strand" evidence="24">
    <location>
        <begin position="208"/>
        <end position="214"/>
    </location>
</feature>
<feature type="strand" evidence="24">
    <location>
        <begin position="217"/>
        <end position="223"/>
    </location>
</feature>
<feature type="helix" evidence="24">
    <location>
        <begin position="225"/>
        <end position="227"/>
    </location>
</feature>
<proteinExistence type="evidence at protein level"/>
<sequence>MAATLLAARGAGPAPAWGPEAFTPDWESREVSTGTTIMAVQFDGGVVLGADSRTTTGSYIANRVTDKLTPIHDRIFCCRSGSAADTQAVADAVTYQLGFHSIELNEPPLVHTAASLFKEMCYRYREDLMAGIIIAGWDPQEGGQVYSVPMGGMMVRQSFAIGGSGSSYIYGYVDATYREGMTKEECLQFTANALALAMERDGSSGGVIRLAAIAESGVERQVLLGDQIPKFAVATLPPA</sequence>
<name>PSB6_HUMAN</name>
<reference key="1">
    <citation type="journal article" date="1994" name="Science">
        <title>cDNA cloning and interferon gamma down-regulation of proteasomal subunits X and Y.</title>
        <authorList>
            <person name="Akiyama K.-Y."/>
            <person name="Yokota K.-Y."/>
            <person name="Kagawa S."/>
            <person name="Shimbara N."/>
            <person name="Tamura T."/>
            <person name="Akioka H."/>
            <person name="Nothwang H.G."/>
            <person name="Noda C."/>
            <person name="Tanaka K."/>
            <person name="Ichihara A."/>
        </authorList>
    </citation>
    <scope>NUCLEOTIDE SEQUENCE [MRNA]</scope>
    <scope>INDUCTION</scope>
</reference>
<reference key="2">
    <citation type="journal article" date="2004" name="Genome Res.">
        <title>The status, quality, and expansion of the NIH full-length cDNA project: the Mammalian Gene Collection (MGC).</title>
        <authorList>
            <consortium name="The MGC Project Team"/>
        </authorList>
    </citation>
    <scope>NUCLEOTIDE SEQUENCE [LARGE SCALE MRNA]</scope>
    <source>
        <tissue>Cervix</tissue>
    </source>
</reference>
<reference key="3">
    <citation type="submission" date="2008-12" db="UniProtKB">
        <authorList>
            <person name="Bienvenut W.V."/>
            <person name="Zebisch A."/>
            <person name="Kolch W."/>
        </authorList>
    </citation>
    <scope>PROTEIN SEQUENCE OF 2-9; 54-63 AND 210-230</scope>
    <scope>CLEAVAGE OF INITIATOR METHIONINE</scope>
    <scope>ACETYLATION AT ALA-2</scope>
    <scope>IDENTIFICATION BY MASS SPECTROMETRY</scope>
    <source>
        <tissue>Colon carcinoma</tissue>
    </source>
</reference>
<reference key="4">
    <citation type="journal article" date="1991" name="Biochim. Biophys. Acta">
        <title>The primary structures of four subunits of the human, high-molecular-weight proteinase, macropain (proteasome), are distinct but homologous.</title>
        <authorList>
            <person name="DeMartino G.N."/>
            <person name="Orth K."/>
            <person name="McCullough M.L."/>
            <person name="Lee L.W."/>
            <person name="Munn T.Z."/>
            <person name="Moomaw C.R."/>
            <person name="Dawson P.A."/>
            <person name="Slaughter C.A."/>
        </authorList>
    </citation>
    <scope>NUCLEOTIDE SEQUENCE [MRNA] OF 60-239</scope>
    <scope>PROTEIN SEQUENCE OF 35-75; 80-110 AND 210-233</scope>
</reference>
<reference key="5">
    <citation type="journal article" date="1990" name="Biochim. Biophys. Acta">
        <title>Relationships among the subunits of the high molecular weight proteinase, macropain (proteasome).</title>
        <authorList>
            <person name="Lee L.W."/>
            <person name="Moomaw C.R."/>
            <person name="Orth K."/>
            <person name="McGuire M.J."/>
            <person name="DeMartino G.N."/>
            <person name="Slaughter C.A."/>
        </authorList>
    </citation>
    <scope>PROTEIN SEQUENCE OF 35-60</scope>
</reference>
<reference key="6">
    <citation type="submission" date="2007-03" db="UniProtKB">
        <authorList>
            <person name="Lubec G."/>
            <person name="Vishwanath V."/>
        </authorList>
    </citation>
    <scope>PROTEIN SEQUENCE OF 157-178</scope>
    <scope>IDENTIFICATION BY MASS SPECTROMETRY</scope>
    <source>
        <tissue>Brain</tissue>
        <tissue>Cajal-Retzius cell</tissue>
    </source>
</reference>
<reference key="7">
    <citation type="journal article" date="1994" name="FEBS Lett.">
        <title>Replacement of proteasome subunits X and Y by LMP7 and LMP2 induced by interferon-gamma for acquirement of the functional diversity responsible for antigen processing.</title>
        <authorList>
            <person name="Akiyama K."/>
            <person name="Kagawa S."/>
            <person name="Tamura T."/>
            <person name="Shimbara N."/>
            <person name="Takashina M."/>
            <person name="Kristensen P."/>
            <person name="Hendil K.B."/>
            <person name="Tanaka K."/>
            <person name="Ichihara A."/>
        </authorList>
    </citation>
    <scope>SUBUNIT</scope>
</reference>
<reference key="8">
    <citation type="journal article" date="1996" name="Nature">
        <title>A role for the proteasome regulator PA28alpha in antigen presentation.</title>
        <authorList>
            <person name="Groettrup M."/>
            <person name="Soza A."/>
            <person name="Eggers M."/>
            <person name="Kuehn L."/>
            <person name="Dick T.P."/>
            <person name="Schild H."/>
            <person name="Rammensee H.G."/>
            <person name="Koszinowski U.H."/>
            <person name="Kloetzel P.M."/>
        </authorList>
    </citation>
    <scope>FUNCTION IN ANTIGEN PRESENTATION</scope>
</reference>
<reference key="9">
    <citation type="journal article" date="2002" name="Mol. Biol. Cell">
        <title>Clastosome: a subtype of nuclear body enriched in 19S and 20S proteasomes, ubiquitin, and protein substrates of proteasome.</title>
        <authorList>
            <person name="Lafarga M."/>
            <person name="Berciano M.T."/>
            <person name="Pena E."/>
            <person name="Mayo I."/>
            <person name="Castano J.G."/>
            <person name="Bohmann D."/>
            <person name="Rodrigues J.P."/>
            <person name="Tavanez J.P."/>
            <person name="Carmo-Fonseca M."/>
        </authorList>
    </citation>
    <scope>SUBCELLULAR LOCATION</scope>
</reference>
<reference key="10">
    <citation type="journal article" date="2003" name="FEBS Lett.">
        <title>Human immunodeficiency virus-1 Tat protein interacts with distinct proteasomal alpha and beta subunits.</title>
        <authorList>
            <person name="Apcher G.S."/>
            <person name="Heink S."/>
            <person name="Zantopf D."/>
            <person name="Kloetzel P.-M."/>
            <person name="Schmid H.-P."/>
            <person name="Mayer R.J."/>
            <person name="Krueger E."/>
        </authorList>
    </citation>
    <scope>INTERACTION WITH HIV-1 TAT (MICROBIAL INFECTION)</scope>
</reference>
<reference key="11">
    <citation type="journal article" date="2004" name="Biomacromolecules">
        <title>20S proteasome prevents aggregation of heat-denatured proteins without PA700 regulatory subcomplex like a molecular chaperone.</title>
        <authorList>
            <person name="Yano M."/>
            <person name="Koumoto Y."/>
            <person name="Kanesaki Y."/>
            <person name="Wu X."/>
            <person name="Kido H."/>
        </authorList>
    </citation>
    <scope>FUNCTION</scope>
</reference>
<reference key="12">
    <citation type="journal article" date="2004" name="Endocr. Relat. Cancer">
        <title>Comprehensive gene expression profiling of anaplastic thyroid cancers with cDNA microarray of 25 344 genes.</title>
        <authorList>
            <person name="Onda M."/>
            <person name="Emi M."/>
            <person name="Yoshida A."/>
            <person name="Miyamoto S."/>
            <person name="Akaishi J."/>
            <person name="Asaka S."/>
            <person name="Mizutani K."/>
            <person name="Shimizu K."/>
            <person name="Nagahama M."/>
            <person name="Ito K."/>
            <person name="Tanaka T."/>
            <person name="Tsunoda T."/>
        </authorList>
    </citation>
    <scope>INDUCTION</scope>
</reference>
<reference key="13">
    <citation type="journal article" date="2007" name="Biochemistry">
        <title>Mass spectrometric characterization of the affinity-purified human 26S proteasome complex.</title>
        <authorList>
            <person name="Wang X."/>
            <person name="Chen C.-F."/>
            <person name="Baker P.R."/>
            <person name="Chen P.-L."/>
            <person name="Kaiser P."/>
            <person name="Huang L."/>
        </authorList>
    </citation>
    <scope>IDENTIFICATION BY MASS SPECTROMETRY [LARGE SCALE ANALYSIS]</scope>
    <source>
        <tissue>Embryonic kidney</tissue>
    </source>
</reference>
<reference key="14">
    <citation type="journal article" date="2011" name="BMC Syst. Biol.">
        <title>Initial characterization of the human central proteome.</title>
        <authorList>
            <person name="Burkard T.R."/>
            <person name="Planyavsky M."/>
            <person name="Kaupe I."/>
            <person name="Breitwieser F.P."/>
            <person name="Buerckstuemmer T."/>
            <person name="Bennett K.L."/>
            <person name="Superti-Furga G."/>
            <person name="Colinge J."/>
        </authorList>
    </citation>
    <scope>IDENTIFICATION BY MASS SPECTROMETRY [LARGE SCALE ANALYSIS]</scope>
</reference>
<reference key="15">
    <citation type="journal article" date="2012" name="Proc. Natl. Acad. Sci. U.S.A.">
        <title>N-terminal acetylome analyses and functional insights of the N-terminal acetyltransferase NatB.</title>
        <authorList>
            <person name="Van Damme P."/>
            <person name="Lasa M."/>
            <person name="Polevoda B."/>
            <person name="Gazquez C."/>
            <person name="Elosegui-Artola A."/>
            <person name="Kim D.S."/>
            <person name="De Juan-Pardo E."/>
            <person name="Demeyer K."/>
            <person name="Hole K."/>
            <person name="Larrea E."/>
            <person name="Timmerman E."/>
            <person name="Prieto J."/>
            <person name="Arnesen T."/>
            <person name="Sherman F."/>
            <person name="Gevaert K."/>
            <person name="Aldabe R."/>
        </authorList>
    </citation>
    <scope>ACETYLATION [LARGE SCALE ANALYSIS] AT ALA-2</scope>
    <scope>CLEAVAGE OF INITIATOR METHIONINE [LARGE SCALE ANALYSIS]</scope>
    <scope>IDENTIFICATION BY MASS SPECTROMETRY [LARGE SCALE ANALYSIS]</scope>
</reference>
<reference key="16">
    <citation type="journal article" date="2013" name="Annu. Rev. Biochem.">
        <title>Molecular architecture and assembly of the eukaryotic proteasome.</title>
        <authorList>
            <person name="Tomko R.J. Jr."/>
            <person name="Hochstrasser M."/>
        </authorList>
    </citation>
    <scope>NOMENCLATURE</scope>
</reference>
<reference key="17">
    <citation type="journal article" date="2013" name="J. Proteome Res.">
        <title>Toward a comprehensive characterization of a human cancer cell phosphoproteome.</title>
        <authorList>
            <person name="Zhou H."/>
            <person name="Di Palma S."/>
            <person name="Preisinger C."/>
            <person name="Peng M."/>
            <person name="Polat A.N."/>
            <person name="Heck A.J."/>
            <person name="Mohammed S."/>
        </authorList>
    </citation>
    <scope>PHOSPHORYLATION [LARGE SCALE ANALYSIS] AT THR-69</scope>
    <scope>IDENTIFICATION BY MASS SPECTROMETRY [LARGE SCALE ANALYSIS]</scope>
    <source>
        <tissue>Erythroleukemia</tissue>
    </source>
</reference>
<reference key="18">
    <citation type="journal article" date="2016" name="Biol. Chem.">
        <title>Human 20S proteasome activity towards fluorogenic peptides of various chain lengths.</title>
        <authorList>
            <person name="Rut W."/>
            <person name="Drag M."/>
        </authorList>
    </citation>
    <scope>FUNCTION</scope>
    <scope>CATALYTIC ACTIVITY</scope>
</reference>
<reference key="19">
    <citation type="journal article" date="2015" name="Nat. Commun.">
        <title>Cryo-EM reveals the conformation of a substrate analogue in the human 20S proteasome core.</title>
        <authorList>
            <person name="da Fonseca P.C."/>
            <person name="Morris E.P."/>
        </authorList>
    </citation>
    <scope>STRUCTURE BY ELECTRON MICROSCOPY (3.50 ANGSTROMS)</scope>
    <scope>SUBUNIT</scope>
</reference>
<reference key="20">
    <citation type="journal article" date="2015" name="Structure">
        <title>Crystal structure of the human 20S proteasome in complex with carfilzomib.</title>
        <authorList>
            <person name="Harshbarger W."/>
            <person name="Miller C."/>
            <person name="Diedrich C."/>
            <person name="Sacchettini J."/>
        </authorList>
    </citation>
    <scope>X-RAY CRYSTALLOGRAPHY (2.60 ANGSTROMS) OF 35-236</scope>
    <scope>SUBUNIT</scope>
    <scope>ACTIVE SITE</scope>
</reference>
<reference key="21">
    <citation type="journal article" date="2016" name="Nat. Struct. Mol. Biol.">
        <title>An atomic structure of the human 26S proteasome.</title>
        <authorList>
            <person name="Huang X."/>
            <person name="Luan B."/>
            <person name="Wu J."/>
            <person name="Shi Y."/>
        </authorList>
    </citation>
    <scope>STRUCTURE BY ELECTRON MICROSCOPY (3.50 ANGSTROMS)</scope>
    <scope>SUBUNIT</scope>
</reference>
<reference key="22">
    <citation type="journal article" date="2016" name="Proc. Natl. Acad. Sci. U.S.A.">
        <title>Structure of the human 26S proteasome at a resolution of 3.9 Aa.</title>
        <authorList>
            <person name="Schweitzer A."/>
            <person name="Aufderheide A."/>
            <person name="Rudack T."/>
            <person name="Beck F."/>
            <person name="Pfeifer G."/>
            <person name="Plitzko J.M."/>
            <person name="Sakata E."/>
            <person name="Schulten K."/>
            <person name="Foerster F."/>
            <person name="Baumeister W."/>
        </authorList>
    </citation>
    <scope>STRUCTURE BY ELECTRON MICROSCOPY (4.02 ANGSTROMS)</scope>
    <scope>SUBUNIT</scope>
</reference>
<reference key="23">
    <citation type="journal article" date="2016" name="Science">
        <title>The inhibition mechanism of human 20S proteasomes enables next-generation inhibitor design.</title>
        <authorList>
            <person name="Schrader J."/>
            <person name="Henneberg F."/>
            <person name="Mata R.A."/>
            <person name="Tittmann K."/>
            <person name="Schneider T.R."/>
            <person name="Stark H."/>
            <person name="Bourenkov G."/>
            <person name="Chari A."/>
        </authorList>
    </citation>
    <scope>X-RAY CRYSTALLOGRAPHY (1.80 ANGSTROMS)</scope>
    <scope>SUBUNIT</scope>
    <scope>ACTIVE SITE</scope>
</reference>
<reference key="24">
    <citation type="journal article" date="2021" name="Nature">
        <title>AKIRIN2 controls the nuclear import of proteasomes in vertebrates.</title>
        <authorList>
            <person name="de Almeida M."/>
            <person name="Hinterndorfer M."/>
            <person name="Brunner H."/>
            <person name="Grishkovskaya I."/>
            <person name="Singh K."/>
            <person name="Schleiffer A."/>
            <person name="Jude J."/>
            <person name="Deswal S."/>
            <person name="Kalis R."/>
            <person name="Vunjak M."/>
            <person name="Lendl T."/>
            <person name="Imre R."/>
            <person name="Roitinger E."/>
            <person name="Neumann T."/>
            <person name="Kandolf S."/>
            <person name="Schutzbier M."/>
            <person name="Mechtler K."/>
            <person name="Versteeg G.A."/>
            <person name="Haselbach D."/>
            <person name="Zuber J."/>
        </authorList>
    </citation>
    <scope>STRUCTURE BY ELECTRON MICROSCOPY (2.80 ANGSTROMS) IN COMPLEX WITH AKIRIN2</scope>
    <scope>SUBUNIT</scope>
    <scope>SUBCELLULAR LOCATION</scope>
</reference>